<accession>A6R3L3</accession>
<dbReference type="EC" id="3.6.4.13"/>
<dbReference type="EMBL" id="CH476658">
    <property type="protein sequence ID" value="EDN07711.1"/>
    <property type="molecule type" value="Genomic_DNA"/>
</dbReference>
<dbReference type="SMR" id="A6R3L3"/>
<dbReference type="STRING" id="339724.A6R3L3"/>
<dbReference type="KEGG" id="aje:HCAG_04221"/>
<dbReference type="VEuPathDB" id="FungiDB:HCAG_04221"/>
<dbReference type="HOGENOM" id="CLU_003041_16_3_1"/>
<dbReference type="OMA" id="CYRSWVR"/>
<dbReference type="OrthoDB" id="10435at299071"/>
<dbReference type="Proteomes" id="UP000009297">
    <property type="component" value="Unassembled WGS sequence"/>
</dbReference>
<dbReference type="GO" id="GO:0005737">
    <property type="term" value="C:cytoplasm"/>
    <property type="evidence" value="ECO:0007669"/>
    <property type="project" value="UniProtKB-SubCell"/>
</dbReference>
<dbReference type="GO" id="GO:0005524">
    <property type="term" value="F:ATP binding"/>
    <property type="evidence" value="ECO:0007669"/>
    <property type="project" value="UniProtKB-KW"/>
</dbReference>
<dbReference type="GO" id="GO:0016887">
    <property type="term" value="F:ATP hydrolysis activity"/>
    <property type="evidence" value="ECO:0007669"/>
    <property type="project" value="RHEA"/>
</dbReference>
<dbReference type="GO" id="GO:0003723">
    <property type="term" value="F:RNA binding"/>
    <property type="evidence" value="ECO:0007669"/>
    <property type="project" value="UniProtKB-KW"/>
</dbReference>
<dbReference type="GO" id="GO:0003724">
    <property type="term" value="F:RNA helicase activity"/>
    <property type="evidence" value="ECO:0007669"/>
    <property type="project" value="UniProtKB-EC"/>
</dbReference>
<dbReference type="GO" id="GO:0003743">
    <property type="term" value="F:translation initiation factor activity"/>
    <property type="evidence" value="ECO:0007669"/>
    <property type="project" value="UniProtKB-KW"/>
</dbReference>
<dbReference type="CDD" id="cd17967">
    <property type="entry name" value="DEADc_DDX3_DDX4"/>
    <property type="match status" value="1"/>
</dbReference>
<dbReference type="CDD" id="cd18787">
    <property type="entry name" value="SF2_C_DEAD"/>
    <property type="match status" value="1"/>
</dbReference>
<dbReference type="FunFam" id="3.40.50.300:FF:000008">
    <property type="entry name" value="ATP-dependent RNA helicase RhlB"/>
    <property type="match status" value="1"/>
</dbReference>
<dbReference type="FunFam" id="3.40.50.300:FF:000397">
    <property type="entry name" value="Probable ATP-dependent RNA helicase DDX4"/>
    <property type="match status" value="1"/>
</dbReference>
<dbReference type="Gene3D" id="3.40.50.300">
    <property type="entry name" value="P-loop containing nucleotide triphosphate hydrolases"/>
    <property type="match status" value="2"/>
</dbReference>
<dbReference type="InterPro" id="IPR011545">
    <property type="entry name" value="DEAD/DEAH_box_helicase_dom"/>
</dbReference>
<dbReference type="InterPro" id="IPR044763">
    <property type="entry name" value="Ded1/Dbp1_DEADc"/>
</dbReference>
<dbReference type="InterPro" id="IPR014001">
    <property type="entry name" value="Helicase_ATP-bd"/>
</dbReference>
<dbReference type="InterPro" id="IPR001650">
    <property type="entry name" value="Helicase_C-like"/>
</dbReference>
<dbReference type="InterPro" id="IPR027417">
    <property type="entry name" value="P-loop_NTPase"/>
</dbReference>
<dbReference type="InterPro" id="IPR000629">
    <property type="entry name" value="RNA-helicase_DEAD-box_CS"/>
</dbReference>
<dbReference type="InterPro" id="IPR014014">
    <property type="entry name" value="RNA_helicase_DEAD_Q_motif"/>
</dbReference>
<dbReference type="PANTHER" id="PTHR47958">
    <property type="entry name" value="ATP-DEPENDENT RNA HELICASE DBP3"/>
    <property type="match status" value="1"/>
</dbReference>
<dbReference type="Pfam" id="PF00270">
    <property type="entry name" value="DEAD"/>
    <property type="match status" value="1"/>
</dbReference>
<dbReference type="Pfam" id="PF00271">
    <property type="entry name" value="Helicase_C"/>
    <property type="match status" value="1"/>
</dbReference>
<dbReference type="SMART" id="SM00487">
    <property type="entry name" value="DEXDc"/>
    <property type="match status" value="1"/>
</dbReference>
<dbReference type="SMART" id="SM00490">
    <property type="entry name" value="HELICc"/>
    <property type="match status" value="1"/>
</dbReference>
<dbReference type="SUPFAM" id="SSF52540">
    <property type="entry name" value="P-loop containing nucleoside triphosphate hydrolases"/>
    <property type="match status" value="1"/>
</dbReference>
<dbReference type="PROSITE" id="PS00039">
    <property type="entry name" value="DEAD_ATP_HELICASE"/>
    <property type="match status" value="1"/>
</dbReference>
<dbReference type="PROSITE" id="PS51192">
    <property type="entry name" value="HELICASE_ATP_BIND_1"/>
    <property type="match status" value="1"/>
</dbReference>
<dbReference type="PROSITE" id="PS51194">
    <property type="entry name" value="HELICASE_CTER"/>
    <property type="match status" value="1"/>
</dbReference>
<dbReference type="PROSITE" id="PS51195">
    <property type="entry name" value="Q_MOTIF"/>
    <property type="match status" value="1"/>
</dbReference>
<evidence type="ECO:0000250" key="1"/>
<evidence type="ECO:0000255" key="2">
    <source>
        <dbReference type="PROSITE-ProRule" id="PRU00541"/>
    </source>
</evidence>
<evidence type="ECO:0000255" key="3">
    <source>
        <dbReference type="PROSITE-ProRule" id="PRU00542"/>
    </source>
</evidence>
<evidence type="ECO:0000256" key="4">
    <source>
        <dbReference type="SAM" id="MobiDB-lite"/>
    </source>
</evidence>
<evidence type="ECO:0000305" key="5"/>
<protein>
    <recommendedName>
        <fullName>ATP-dependent RNA helicase DED1</fullName>
        <ecNumber>3.6.4.13</ecNumber>
    </recommendedName>
</protein>
<feature type="chain" id="PRO_0000310180" description="ATP-dependent RNA helicase DED1">
    <location>
        <begin position="1"/>
        <end position="694"/>
    </location>
</feature>
<feature type="domain" description="Helicase ATP-binding" evidence="2">
    <location>
        <begin position="234"/>
        <end position="423"/>
    </location>
</feature>
<feature type="domain" description="Helicase C-terminal" evidence="3">
    <location>
        <begin position="434"/>
        <end position="596"/>
    </location>
</feature>
<feature type="region of interest" description="Disordered" evidence="4">
    <location>
        <begin position="1"/>
        <end position="158"/>
    </location>
</feature>
<feature type="region of interest" description="Disordered" evidence="4">
    <location>
        <begin position="602"/>
        <end position="640"/>
    </location>
</feature>
<feature type="short sequence motif" description="Q motif">
    <location>
        <begin position="203"/>
        <end position="231"/>
    </location>
</feature>
<feature type="short sequence motif" description="DEAD box">
    <location>
        <begin position="367"/>
        <end position="370"/>
    </location>
</feature>
<feature type="compositionally biased region" description="Gly residues" evidence="4">
    <location>
        <begin position="130"/>
        <end position="146"/>
    </location>
</feature>
<feature type="compositionally biased region" description="Gly residues" evidence="4">
    <location>
        <begin position="604"/>
        <end position="620"/>
    </location>
</feature>
<feature type="compositionally biased region" description="Gly residues" evidence="4">
    <location>
        <begin position="630"/>
        <end position="640"/>
    </location>
</feature>
<feature type="binding site" evidence="2">
    <location>
        <begin position="247"/>
        <end position="254"/>
    </location>
    <ligand>
        <name>ATP</name>
        <dbReference type="ChEBI" id="CHEBI:30616"/>
    </ligand>
</feature>
<organism>
    <name type="scientific">Ajellomyces capsulatus (strain NAm1 / WU24)</name>
    <name type="common">Darling's disease fungus</name>
    <name type="synonym">Histoplasma capsulatum</name>
    <dbReference type="NCBI Taxonomy" id="2059318"/>
    <lineage>
        <taxon>Eukaryota</taxon>
        <taxon>Fungi</taxon>
        <taxon>Dikarya</taxon>
        <taxon>Ascomycota</taxon>
        <taxon>Pezizomycotina</taxon>
        <taxon>Eurotiomycetes</taxon>
        <taxon>Eurotiomycetidae</taxon>
        <taxon>Onygenales</taxon>
        <taxon>Ajellomycetaceae</taxon>
        <taxon>Histoplasma</taxon>
    </lineage>
</organism>
<proteinExistence type="inferred from homology"/>
<name>DED1_AJECN</name>
<keyword id="KW-0067">ATP-binding</keyword>
<keyword id="KW-0963">Cytoplasm</keyword>
<keyword id="KW-0347">Helicase</keyword>
<keyword id="KW-0378">Hydrolase</keyword>
<keyword id="KW-0396">Initiation factor</keyword>
<keyword id="KW-0547">Nucleotide-binding</keyword>
<keyword id="KW-0648">Protein biosynthesis</keyword>
<keyword id="KW-1185">Reference proteome</keyword>
<keyword id="KW-0694">RNA-binding</keyword>
<reference key="1">
    <citation type="journal article" date="2009" name="Genome Res.">
        <title>Comparative genomic analyses of the human fungal pathogens Coccidioides and their relatives.</title>
        <authorList>
            <person name="Sharpton T.J."/>
            <person name="Stajich J.E."/>
            <person name="Rounsley S.D."/>
            <person name="Gardner M.J."/>
            <person name="Wortman J.R."/>
            <person name="Jordar V.S."/>
            <person name="Maiti R."/>
            <person name="Kodira C.D."/>
            <person name="Neafsey D.E."/>
            <person name="Zeng Q."/>
            <person name="Hung C.-Y."/>
            <person name="McMahan C."/>
            <person name="Muszewska A."/>
            <person name="Grynberg M."/>
            <person name="Mandel M.A."/>
            <person name="Kellner E.M."/>
            <person name="Barker B.M."/>
            <person name="Galgiani J.N."/>
            <person name="Orbach M.J."/>
            <person name="Kirkland T.N."/>
            <person name="Cole G.T."/>
            <person name="Henn M.R."/>
            <person name="Birren B.W."/>
            <person name="Taylor J.W."/>
        </authorList>
    </citation>
    <scope>NUCLEOTIDE SEQUENCE [LARGE SCALE GENOMIC DNA]</scope>
    <source>
        <strain>NAm1 / WU24</strain>
    </source>
</reference>
<gene>
    <name type="primary">DED1</name>
    <name type="ORF">HCAG_04221</name>
</gene>
<sequence length="694" mass="73918">MANGLNIGSLKIDDSQRPAGPNTTGRAAYIPPHLRGSVARPPMGLDGSGPAQAVPGLNASTWAPNNAGPHPGAGHNWANAQNFTPRDRPPGAPAGPPSMNGNTTWGNAPPRQFNANDYGKPGPNSFRGSSYGGGRSGGTRGIGGHGYWDENGKHAQGPENKRLERELFGEADDPTKQHTGINFSNYDSIPVEASGHDVPESITAFTNPPLHEHLLSNIVLARYTVPTPVQKYSIPIVMGGRDLMACAQTGSGKTGGFLFPILSQSLHTRGPEAEAARGLGRQQKAYPTALILGPTRELVSQIYDEARKFCYRTALHPRVVYGGAEMGNQLRQLDQGCNVLVATPGRLVDMMERGRISLAHIQYLVLDEADRMLDMGFEPQIRRIVQGSDMPDKHMRQTLMFSATFPPDIQKLAEEFLKDHIFLSVGRVGSTSENITQRIVECESDKDKDSALLDILCSDSTGLTLVFVETKRQADMLSDFLLDHRLPATAIHGDRTQRERERALELFRTGRCPILVATAVAARGLDIPNVTHVINYDLPNEIDDYVHRIGRTGRAGNTGISTAFFSRSKNFKIARSLVDLLKDANQEVPDFLEKLGRQGNYYGSSGGGRGGRGGGRGRGGSSSTRDIRRTGGGYGGGGMGGSRPAYGGGYGDSGAGGPYGYGGGSGGYGGGYGGGYGGGGYGNPSGPTGPSSWW</sequence>
<comment type="function">
    <text evidence="1">ATP-binding RNA helicase involved in translation initiation. Remodels RNA in response to ADP and ATP concentrations by facilitating disruption, but also formation of RNA duplexes (By similarity).</text>
</comment>
<comment type="catalytic activity">
    <reaction>
        <text>ATP + H2O = ADP + phosphate + H(+)</text>
        <dbReference type="Rhea" id="RHEA:13065"/>
        <dbReference type="ChEBI" id="CHEBI:15377"/>
        <dbReference type="ChEBI" id="CHEBI:15378"/>
        <dbReference type="ChEBI" id="CHEBI:30616"/>
        <dbReference type="ChEBI" id="CHEBI:43474"/>
        <dbReference type="ChEBI" id="CHEBI:456216"/>
        <dbReference type="EC" id="3.6.4.13"/>
    </reaction>
</comment>
<comment type="subcellular location">
    <subcellularLocation>
        <location evidence="1">Cytoplasm</location>
    </subcellularLocation>
</comment>
<comment type="domain">
    <text>The Q motif is unique to and characteristic of the DEAD box family of RNA helicases and controls ATP binding and hydrolysis.</text>
</comment>
<comment type="similarity">
    <text evidence="5">Belongs to the DEAD box helicase family. DDX3/DED1 subfamily.</text>
</comment>